<dbReference type="EC" id="3.1.-.-"/>
<dbReference type="EMBL" id="U57963">
    <property type="protein sequence ID" value="AAB02261.1"/>
    <property type="molecule type" value="Genomic_DNA"/>
</dbReference>
<dbReference type="EMBL" id="CP002038">
    <property type="protein sequence ID" value="ADM96891.1"/>
    <property type="molecule type" value="Genomic_DNA"/>
</dbReference>
<dbReference type="EMBL" id="X76687">
    <property type="protein sequence ID" value="CAA54109.1"/>
    <property type="molecule type" value="Genomic_DNA"/>
</dbReference>
<dbReference type="RefSeq" id="WP_013316368.1">
    <property type="nucleotide sequence ID" value="NC_014500.1"/>
</dbReference>
<dbReference type="SMR" id="P39693"/>
<dbReference type="STRING" id="198628.Dda3937_02294"/>
<dbReference type="KEGG" id="ddd:Dda3937_02294"/>
<dbReference type="PATRIC" id="fig|198628.6.peg.694"/>
<dbReference type="eggNOG" id="COG0608">
    <property type="taxonomic scope" value="Bacteria"/>
</dbReference>
<dbReference type="HOGENOM" id="CLU_009736_5_1_6"/>
<dbReference type="OrthoDB" id="9809852at2"/>
<dbReference type="Proteomes" id="UP000006859">
    <property type="component" value="Chromosome"/>
</dbReference>
<dbReference type="GO" id="GO:0008409">
    <property type="term" value="F:5'-3' exonuclease activity"/>
    <property type="evidence" value="ECO:0007669"/>
    <property type="project" value="InterPro"/>
</dbReference>
<dbReference type="GO" id="GO:0003676">
    <property type="term" value="F:nucleic acid binding"/>
    <property type="evidence" value="ECO:0007669"/>
    <property type="project" value="InterPro"/>
</dbReference>
<dbReference type="GO" id="GO:0006310">
    <property type="term" value="P:DNA recombination"/>
    <property type="evidence" value="ECO:0007669"/>
    <property type="project" value="InterPro"/>
</dbReference>
<dbReference type="GO" id="GO:0006281">
    <property type="term" value="P:DNA repair"/>
    <property type="evidence" value="ECO:0007669"/>
    <property type="project" value="InterPro"/>
</dbReference>
<dbReference type="FunFam" id="3.90.1640.30:FF:000001">
    <property type="entry name" value="Single-stranded-DNA-specific exonuclease RecJ"/>
    <property type="match status" value="1"/>
</dbReference>
<dbReference type="FunFam" id="3.10.310.30:FF:000001">
    <property type="entry name" value="Single-stranded-DNA-specific exonuclease recJ"/>
    <property type="match status" value="1"/>
</dbReference>
<dbReference type="Gene3D" id="3.10.310.30">
    <property type="match status" value="1"/>
</dbReference>
<dbReference type="Gene3D" id="3.90.1640.30">
    <property type="match status" value="1"/>
</dbReference>
<dbReference type="InterPro" id="IPR001667">
    <property type="entry name" value="DDH_dom"/>
</dbReference>
<dbReference type="InterPro" id="IPR038763">
    <property type="entry name" value="DHH_sf"/>
</dbReference>
<dbReference type="InterPro" id="IPR003156">
    <property type="entry name" value="DHHA1_dom"/>
</dbReference>
<dbReference type="InterPro" id="IPR004610">
    <property type="entry name" value="RecJ"/>
</dbReference>
<dbReference type="InterPro" id="IPR041122">
    <property type="entry name" value="RecJ_OB"/>
</dbReference>
<dbReference type="InterPro" id="IPR051673">
    <property type="entry name" value="SSDNA_exonuclease_RecJ"/>
</dbReference>
<dbReference type="NCBIfam" id="NF008290">
    <property type="entry name" value="PRK11070.1"/>
    <property type="match status" value="1"/>
</dbReference>
<dbReference type="NCBIfam" id="TIGR00644">
    <property type="entry name" value="recJ"/>
    <property type="match status" value="1"/>
</dbReference>
<dbReference type="PANTHER" id="PTHR30255">
    <property type="entry name" value="SINGLE-STRANDED-DNA-SPECIFIC EXONUCLEASE RECJ"/>
    <property type="match status" value="1"/>
</dbReference>
<dbReference type="PANTHER" id="PTHR30255:SF2">
    <property type="entry name" value="SINGLE-STRANDED-DNA-SPECIFIC EXONUCLEASE RECJ"/>
    <property type="match status" value="1"/>
</dbReference>
<dbReference type="Pfam" id="PF01368">
    <property type="entry name" value="DHH"/>
    <property type="match status" value="1"/>
</dbReference>
<dbReference type="Pfam" id="PF02272">
    <property type="entry name" value="DHHA1"/>
    <property type="match status" value="1"/>
</dbReference>
<dbReference type="Pfam" id="PF17768">
    <property type="entry name" value="RecJ_OB"/>
    <property type="match status" value="1"/>
</dbReference>
<dbReference type="SUPFAM" id="SSF64182">
    <property type="entry name" value="DHH phosphoesterases"/>
    <property type="match status" value="1"/>
</dbReference>
<proteinExistence type="inferred from homology"/>
<comment type="function">
    <text evidence="1">Single-stranded-DNA-specific exonuclease. Required for many types of recombinational events, although the stringency of the requirement for RecJ appears to vary with the type of recombinational event monitored and the other recombination gene products which are available (By similarity).</text>
</comment>
<comment type="similarity">
    <text evidence="2">Belongs to the RecJ family.</text>
</comment>
<name>RECJ_DICD3</name>
<reference key="1">
    <citation type="submission" date="1996-06" db="EMBL/GenBank/DDBJ databases">
        <authorList>
            <person name="Lovett S.T."/>
            <person name="Tzoneva M."/>
            <person name="Sutera V.A."/>
        </authorList>
    </citation>
    <scope>NUCLEOTIDE SEQUENCE [GENOMIC DNA]</scope>
</reference>
<reference key="2">
    <citation type="journal article" date="2011" name="J. Bacteriol.">
        <title>Genome sequence of the plant-pathogenic bacterium Dickeya dadantii 3937.</title>
        <authorList>
            <person name="Glasner J.D."/>
            <person name="Yang C.H."/>
            <person name="Reverchon S."/>
            <person name="Hugouvieux-Cotte-Pattat N."/>
            <person name="Condemine G."/>
            <person name="Bohin J.P."/>
            <person name="Van Gijsegem F."/>
            <person name="Yang S."/>
            <person name="Franza T."/>
            <person name="Expert D."/>
            <person name="Plunkett G. III"/>
            <person name="San Francisco M.J."/>
            <person name="Charkowski A.O."/>
            <person name="Py B."/>
            <person name="Bell K."/>
            <person name="Rauscher L."/>
            <person name="Rodriguez-Palenzuela P."/>
            <person name="Toussaint A."/>
            <person name="Holeva M.C."/>
            <person name="He S.Y."/>
            <person name="Douet V."/>
            <person name="Boccara M."/>
            <person name="Blanco C."/>
            <person name="Toth I."/>
            <person name="Anderson B.D."/>
            <person name="Biehl B.S."/>
            <person name="Mau B."/>
            <person name="Flynn S.M."/>
            <person name="Barras F."/>
            <person name="Lindeberg M."/>
            <person name="Birch P.R."/>
            <person name="Tsuyumu S."/>
            <person name="Shi X."/>
            <person name="Hibbing M."/>
            <person name="Yap M.N."/>
            <person name="Carpentier M."/>
            <person name="Dassa E."/>
            <person name="Umehara M."/>
            <person name="Kim J.F."/>
            <person name="Rusch M."/>
            <person name="Soni P."/>
            <person name="Mayhew G.F."/>
            <person name="Fouts D.E."/>
            <person name="Gill S.R."/>
            <person name="Blattner F.R."/>
            <person name="Keen N.T."/>
            <person name="Perna N.T."/>
        </authorList>
    </citation>
    <scope>NUCLEOTIDE SEQUENCE [LARGE SCALE GENOMIC DNA]</scope>
    <source>
        <strain>3937</strain>
    </source>
</reference>
<reference key="3">
    <citation type="journal article" date="1994" name="EMBO J.">
        <title>Characterization of DsbC, a periplasmic protein of Erwinia chrysanthemi and Escherichia coli with disulfide isomerase activity.</title>
        <authorList>
            <person name="Shevchik V.E."/>
            <person name="Condemine G."/>
            <person name="Robert-Baudouy J."/>
        </authorList>
    </citation>
    <scope>NUCLEOTIDE SEQUENCE [GENOMIC DNA] OF 1-100</scope>
</reference>
<protein>
    <recommendedName>
        <fullName>Single-stranded-DNA-specific exonuclease RecJ</fullName>
        <ecNumber>3.1.-.-</ecNumber>
    </recommendedName>
</protein>
<evidence type="ECO:0000250" key="1"/>
<evidence type="ECO:0000305" key="2"/>
<keyword id="KW-0269">Exonuclease</keyword>
<keyword id="KW-0378">Hydrolase</keyword>
<keyword id="KW-0540">Nuclease</keyword>
<keyword id="KW-1185">Reference proteome</keyword>
<feature type="chain" id="PRO_0000097229" description="Single-stranded-DNA-specific exonuclease RecJ">
    <location>
        <begin position="1"/>
        <end position="576"/>
    </location>
</feature>
<feature type="sequence conflict" description="In Ref. 3; CAA54109." evidence="2" ref="3">
    <original>MNVVTQ</original>
    <variation>MLLPN</variation>
    <location>
        <begin position="1"/>
        <end position="6"/>
    </location>
</feature>
<feature type="sequence conflict" description="In Ref. 1; AAB02261." evidence="2" ref="1">
    <original>G</original>
    <variation>R</variation>
    <location>
        <position position="83"/>
    </location>
</feature>
<feature type="sequence conflict" description="In Ref. 1; AAB02261." evidence="2" ref="1">
    <original>GG</original>
    <variation>AA</variation>
    <location>
        <begin position="98"/>
        <end position="99"/>
    </location>
</feature>
<feature type="sequence conflict" description="In Ref. 3; CAA54109." evidence="2" ref="3">
    <original>R</original>
    <variation>H</variation>
    <location>
        <position position="100"/>
    </location>
</feature>
<feature type="sequence conflict" description="In Ref. 1; AAB02261." evidence="2" ref="1">
    <original>A</original>
    <variation>P</variation>
    <location>
        <position position="125"/>
    </location>
</feature>
<feature type="sequence conflict" description="In Ref. 1; AAB02261." evidence="2" ref="1">
    <original>ND</original>
    <variation>KH</variation>
    <location>
        <begin position="309"/>
        <end position="310"/>
    </location>
</feature>
<feature type="sequence conflict" description="In Ref. 1; AAB02261." evidence="2" ref="1">
    <original>S</original>
    <variation>T</variation>
    <location>
        <position position="349"/>
    </location>
</feature>
<feature type="sequence conflict" description="In Ref. 1; AAB02261." evidence="2" ref="1">
    <original>RD</original>
    <variation>H</variation>
    <location>
        <begin position="408"/>
        <end position="409"/>
    </location>
</feature>
<feature type="sequence conflict" description="In Ref. 1; AAB02261." evidence="2" ref="1">
    <original>EL</original>
    <variation>DV</variation>
    <location>
        <begin position="475"/>
        <end position="476"/>
    </location>
</feature>
<accession>P39693</accession>
<accession>E0SLQ7</accession>
<accession>Q47007</accession>
<sequence>MNVVTQLRRRPTAETELPDSLPALLRRLYAQRGVRQMQELERSLRGLLDYRLLGGITQAVEVLRQALADNRRIVIVGDFDADGATSTALTVLALRSMGGREVQYLVPNRFEDGYGLSPEVVAQAAAKGAELIVTVDNGISSHAGVDDAHRRGIAVVVTDHHLPGETLPAAEAMINPNLSDCAFPSKALAGVGVAFYLMMALRANLRECGWFAERGLAEPNLAELLDLVALGTVADVVPLDANNRILISQGLSRIRAGKCRPGIRALLEVSNRDAAQLVASDLGFALGPRLNAAGRLDDMSVGVELLLCNDIVQARMLASDLDALNQSRREIEAGMQVEALHLCEQLERSRDTLPLGLAMYHPQWHQGVVGILASRIKERFHRPVIAFAPAGDGILKGSGRSIAGLHLRDALERLDTCHPGLMLKFGGHAMAAGLSLVEDRFDEFRQRFADLVGEWLDASQLEGVVWSDGELASPELTLGTAEMLREAGPWGQAFPEPTFDGRFRLLQQRLVGERHLKVMVEPLGGGPLLDGIAFNVDTLLWPDSSVREVELAYKLDVNEFRGKRSVQLLIEHLWPL</sequence>
<organism>
    <name type="scientific">Dickeya dadantii (strain 3937)</name>
    <name type="common">Erwinia chrysanthemi (strain 3937)</name>
    <dbReference type="NCBI Taxonomy" id="198628"/>
    <lineage>
        <taxon>Bacteria</taxon>
        <taxon>Pseudomonadati</taxon>
        <taxon>Pseudomonadota</taxon>
        <taxon>Gammaproteobacteria</taxon>
        <taxon>Enterobacterales</taxon>
        <taxon>Pectobacteriaceae</taxon>
        <taxon>Dickeya</taxon>
    </lineage>
</organism>
<gene>
    <name type="primary">recJ</name>
    <name type="ordered locus">Dda3937_02294</name>
</gene>